<accession>O15991</accession>
<dbReference type="EC" id="2.7.3.5"/>
<dbReference type="EMBL" id="AB008013">
    <property type="protein sequence ID" value="BAA22872.1"/>
    <property type="molecule type" value="mRNA"/>
</dbReference>
<dbReference type="SMR" id="O15991"/>
<dbReference type="KEGG" id="ag:BAA22872"/>
<dbReference type="BioCyc" id="MetaCyc:MONOMER-18469"/>
<dbReference type="GO" id="GO:0005615">
    <property type="term" value="C:extracellular space"/>
    <property type="evidence" value="ECO:0007669"/>
    <property type="project" value="TreeGrafter"/>
</dbReference>
<dbReference type="GO" id="GO:0005524">
    <property type="term" value="F:ATP binding"/>
    <property type="evidence" value="ECO:0007669"/>
    <property type="project" value="UniProtKB-KW"/>
</dbReference>
<dbReference type="GO" id="GO:0004111">
    <property type="term" value="F:creatine kinase activity"/>
    <property type="evidence" value="ECO:0007669"/>
    <property type="project" value="InterPro"/>
</dbReference>
<dbReference type="GO" id="GO:0050059">
    <property type="term" value="F:lombricine kinase activity"/>
    <property type="evidence" value="ECO:0007669"/>
    <property type="project" value="UniProtKB-EC"/>
</dbReference>
<dbReference type="GO" id="GO:0046314">
    <property type="term" value="P:phosphocreatine biosynthetic process"/>
    <property type="evidence" value="ECO:0007669"/>
    <property type="project" value="InterPro"/>
</dbReference>
<dbReference type="CDD" id="cd00716">
    <property type="entry name" value="creatine_kinase_like"/>
    <property type="match status" value="1"/>
</dbReference>
<dbReference type="FunFam" id="3.30.590.10:FF:000002">
    <property type="entry name" value="Creatine kinase S-type, mitochondrial"/>
    <property type="match status" value="1"/>
</dbReference>
<dbReference type="Gene3D" id="1.10.135.10">
    <property type="entry name" value="ATP:guanido phosphotransferase, N-terminal domain"/>
    <property type="match status" value="1"/>
</dbReference>
<dbReference type="Gene3D" id="3.30.590.10">
    <property type="entry name" value="Glutamine synthetase/guanido kinase, catalytic domain"/>
    <property type="match status" value="1"/>
</dbReference>
<dbReference type="InterPro" id="IPR000749">
    <property type="entry name" value="ATP-guanido_PTrfase"/>
</dbReference>
<dbReference type="InterPro" id="IPR022415">
    <property type="entry name" value="ATP-guanido_PTrfase_AS"/>
</dbReference>
<dbReference type="InterPro" id="IPR022414">
    <property type="entry name" value="ATP-guanido_PTrfase_cat"/>
</dbReference>
<dbReference type="InterPro" id="IPR022413">
    <property type="entry name" value="ATP-guanido_PTrfase_N"/>
</dbReference>
<dbReference type="InterPro" id="IPR036802">
    <property type="entry name" value="ATP-guanido_PTrfase_N_sf"/>
</dbReference>
<dbReference type="InterPro" id="IPR014746">
    <property type="entry name" value="Gln_synth/guanido_kin_cat_dom"/>
</dbReference>
<dbReference type="PANTHER" id="PTHR11547">
    <property type="entry name" value="ARGININE OR CREATINE KINASE"/>
    <property type="match status" value="1"/>
</dbReference>
<dbReference type="PANTHER" id="PTHR11547:SF57">
    <property type="entry name" value="PHOSPHAGEN KINASE C-TERMINAL DOMAIN-CONTAINING PROTEIN"/>
    <property type="match status" value="1"/>
</dbReference>
<dbReference type="Pfam" id="PF00217">
    <property type="entry name" value="ATP-gua_Ptrans"/>
    <property type="match status" value="1"/>
</dbReference>
<dbReference type="Pfam" id="PF02807">
    <property type="entry name" value="ATP-gua_PtransN"/>
    <property type="match status" value="1"/>
</dbReference>
<dbReference type="SUPFAM" id="SSF55931">
    <property type="entry name" value="Glutamine synthetase/guanido kinase"/>
    <property type="match status" value="1"/>
</dbReference>
<dbReference type="SUPFAM" id="SSF48034">
    <property type="entry name" value="Guanido kinase N-terminal domain"/>
    <property type="match status" value="1"/>
</dbReference>
<dbReference type="PROSITE" id="PS00112">
    <property type="entry name" value="PHOSPHAGEN_KINASE"/>
    <property type="match status" value="1"/>
</dbReference>
<dbReference type="PROSITE" id="PS51510">
    <property type="entry name" value="PHOSPHAGEN_KINASE_C"/>
    <property type="match status" value="1"/>
</dbReference>
<dbReference type="PROSITE" id="PS51509">
    <property type="entry name" value="PHOSPHAGEN_KINASE_N"/>
    <property type="match status" value="1"/>
</dbReference>
<keyword id="KW-0067">ATP-binding</keyword>
<keyword id="KW-0903">Direct protein sequencing</keyword>
<keyword id="KW-0418">Kinase</keyword>
<keyword id="KW-0547">Nucleotide-binding</keyword>
<keyword id="KW-0808">Transferase</keyword>
<comment type="catalytic activity">
    <reaction>
        <text>L-lombricine + ATP = N-phospho-L-lombricine + ADP + H(+)</text>
        <dbReference type="Rhea" id="RHEA:23292"/>
        <dbReference type="ChEBI" id="CHEBI:15378"/>
        <dbReference type="ChEBI" id="CHEBI:30616"/>
        <dbReference type="ChEBI" id="CHEBI:57825"/>
        <dbReference type="ChEBI" id="CHEBI:58356"/>
        <dbReference type="ChEBI" id="CHEBI:456216"/>
        <dbReference type="EC" id="2.7.3.5"/>
    </reaction>
</comment>
<comment type="subunit">
    <text evidence="1">Homodimer.</text>
</comment>
<comment type="similarity">
    <text evidence="2 3">Belongs to the ATP:guanido phosphotransferase family.</text>
</comment>
<protein>
    <recommendedName>
        <fullName>Lombricine kinase</fullName>
        <shortName>LK</shortName>
        <ecNumber>2.7.3.5</ecNumber>
    </recommendedName>
</protein>
<name>KLOM_EISFE</name>
<organism>
    <name type="scientific">Eisenia fetida</name>
    <name type="common">Red wiggler worm</name>
    <dbReference type="NCBI Taxonomy" id="6396"/>
    <lineage>
        <taxon>Eukaryota</taxon>
        <taxon>Metazoa</taxon>
        <taxon>Spiralia</taxon>
        <taxon>Lophotrochozoa</taxon>
        <taxon>Annelida</taxon>
        <taxon>Clitellata</taxon>
        <taxon>Oligochaeta</taxon>
        <taxon>Crassiclitellata</taxon>
        <taxon>Lumbricina</taxon>
        <taxon>Lumbricidae</taxon>
        <taxon>Lumbricinae</taxon>
        <taxon>Eisenia</taxon>
    </lineage>
</organism>
<sequence>MPKFTARQNFPDYKSNGHKCMVGRHLTEDMYERLYELRTPNGVSIDKCIQPSVDNTGRIIGLVAGDPESYEVFKELFDAVINEKHGGFGPTDKHPPPDLNANALVGGQFDPKYVKSARIRTGRSVKGFCLPPSISRAERREVERIIVDALAGLEGDLAGVYYPLKKMTPEQEKQLIADHFLFQKPTGHLMVNSGAVRDWPDARGIWHNKDKTFLIWINEEDQVRIIAMQHGGDVKAVFERFSRGLTQIEGLMKKHGHEFAWSERLGYICTCPSNLGTGLRASVHLQLHKLSKHPKFEEIILAFHLQKRGTGGEHTEAVDDVYDISNRARLKKSEREFVQLLIDGVGKLIEYEKLLEAGKSIDDVLPASLKG</sequence>
<evidence type="ECO:0000250" key="1"/>
<evidence type="ECO:0000255" key="2">
    <source>
        <dbReference type="PROSITE-ProRule" id="PRU00842"/>
    </source>
</evidence>
<evidence type="ECO:0000255" key="3">
    <source>
        <dbReference type="PROSITE-ProRule" id="PRU00843"/>
    </source>
</evidence>
<proteinExistence type="evidence at protein level"/>
<reference key="1">
    <citation type="journal article" date="1997" name="Biochim. Biophys. Acta">
        <title>Evolution of phosphagen kinase. VI. Isolation, characterization and cDNA-derived amino acid sequence of lombricine kinase from the earthworm Eisenia foetida, and identification of a possible candidate for the guanidine substrate recognition site.</title>
        <authorList>
            <person name="Suzuki T."/>
            <person name="Kawasaki Y."/>
            <person name="Furukohri T."/>
            <person name="Ellington W.R."/>
        </authorList>
    </citation>
    <scope>NUCLEOTIDE SEQUENCE [MRNA]</scope>
    <scope>PARTIAL PROTEIN SEQUENCE</scope>
</reference>
<feature type="chain" id="PRO_0000211985" description="Lombricine kinase">
    <location>
        <begin position="1"/>
        <end position="371"/>
    </location>
</feature>
<feature type="domain" description="Phosphagen kinase N-terminal" evidence="2">
    <location>
        <begin position="1"/>
        <end position="86"/>
    </location>
</feature>
<feature type="domain" description="Phosphagen kinase C-terminal" evidence="3">
    <location>
        <begin position="113"/>
        <end position="355"/>
    </location>
</feature>
<feature type="binding site" evidence="3">
    <location>
        <begin position="116"/>
        <end position="120"/>
    </location>
    <ligand>
        <name>ATP</name>
        <dbReference type="ChEBI" id="CHEBI:30616"/>
    </ligand>
</feature>
<feature type="binding site" evidence="3">
    <location>
        <position position="179"/>
    </location>
    <ligand>
        <name>ATP</name>
        <dbReference type="ChEBI" id="CHEBI:30616"/>
    </ligand>
</feature>
<feature type="binding site" evidence="3">
    <location>
        <position position="224"/>
    </location>
    <ligand>
        <name>ATP</name>
        <dbReference type="ChEBI" id="CHEBI:30616"/>
    </ligand>
</feature>
<feature type="binding site" evidence="3">
    <location>
        <position position="280"/>
    </location>
    <ligand>
        <name>ATP</name>
        <dbReference type="ChEBI" id="CHEBI:30616"/>
    </ligand>
</feature>
<feature type="binding site" evidence="3">
    <location>
        <begin position="308"/>
        <end position="313"/>
    </location>
    <ligand>
        <name>ATP</name>
        <dbReference type="ChEBI" id="CHEBI:30616"/>
    </ligand>
</feature>
<feature type="binding site" evidence="3">
    <location>
        <position position="323"/>
    </location>
    <ligand>
        <name>ATP</name>
        <dbReference type="ChEBI" id="CHEBI:30616"/>
    </ligand>
</feature>